<accession>A4IJA6</accession>
<feature type="chain" id="PRO_1000023198" description="Thymidylate kinase">
    <location>
        <begin position="1"/>
        <end position="225"/>
    </location>
</feature>
<feature type="binding site" evidence="1">
    <location>
        <begin position="10"/>
        <end position="17"/>
    </location>
    <ligand>
        <name>ATP</name>
        <dbReference type="ChEBI" id="CHEBI:30616"/>
    </ligand>
</feature>
<reference key="1">
    <citation type="journal article" date="2007" name="Proc. Natl. Acad. Sci. U.S.A.">
        <title>Genome and proteome of long-chain alkane degrading Geobacillus thermodenitrificans NG80-2 isolated from a deep-subsurface oil reservoir.</title>
        <authorList>
            <person name="Feng L."/>
            <person name="Wang W."/>
            <person name="Cheng J."/>
            <person name="Ren Y."/>
            <person name="Zhao G."/>
            <person name="Gao C."/>
            <person name="Tang Y."/>
            <person name="Liu X."/>
            <person name="Han W."/>
            <person name="Peng X."/>
            <person name="Liu R."/>
            <person name="Wang L."/>
        </authorList>
    </citation>
    <scope>NUCLEOTIDE SEQUENCE [LARGE SCALE GENOMIC DNA]</scope>
    <source>
        <strain>NG80-2</strain>
    </source>
</reference>
<keyword id="KW-0067">ATP-binding</keyword>
<keyword id="KW-0418">Kinase</keyword>
<keyword id="KW-0545">Nucleotide biosynthesis</keyword>
<keyword id="KW-0547">Nucleotide-binding</keyword>
<keyword id="KW-0808">Transferase</keyword>
<gene>
    <name evidence="1" type="primary">tmk</name>
    <name type="ordered locus">GTNG_0023</name>
</gene>
<organism>
    <name type="scientific">Geobacillus thermodenitrificans (strain NG80-2)</name>
    <dbReference type="NCBI Taxonomy" id="420246"/>
    <lineage>
        <taxon>Bacteria</taxon>
        <taxon>Bacillati</taxon>
        <taxon>Bacillota</taxon>
        <taxon>Bacilli</taxon>
        <taxon>Bacillales</taxon>
        <taxon>Anoxybacillaceae</taxon>
        <taxon>Geobacillus</taxon>
    </lineage>
</organism>
<dbReference type="EC" id="2.7.4.9" evidence="1"/>
<dbReference type="EMBL" id="CP000557">
    <property type="protein sequence ID" value="ABO65410.1"/>
    <property type="molecule type" value="Genomic_DNA"/>
</dbReference>
<dbReference type="RefSeq" id="WP_008881672.1">
    <property type="nucleotide sequence ID" value="NC_009328.1"/>
</dbReference>
<dbReference type="SMR" id="A4IJA6"/>
<dbReference type="GeneID" id="87622422"/>
<dbReference type="KEGG" id="gtn:GTNG_0023"/>
<dbReference type="eggNOG" id="COG0125">
    <property type="taxonomic scope" value="Bacteria"/>
</dbReference>
<dbReference type="HOGENOM" id="CLU_049131_0_2_9"/>
<dbReference type="Proteomes" id="UP000001578">
    <property type="component" value="Chromosome"/>
</dbReference>
<dbReference type="GO" id="GO:0005829">
    <property type="term" value="C:cytosol"/>
    <property type="evidence" value="ECO:0007669"/>
    <property type="project" value="TreeGrafter"/>
</dbReference>
<dbReference type="GO" id="GO:0005524">
    <property type="term" value="F:ATP binding"/>
    <property type="evidence" value="ECO:0007669"/>
    <property type="project" value="UniProtKB-UniRule"/>
</dbReference>
<dbReference type="GO" id="GO:0004798">
    <property type="term" value="F:dTMP kinase activity"/>
    <property type="evidence" value="ECO:0007669"/>
    <property type="project" value="UniProtKB-UniRule"/>
</dbReference>
<dbReference type="GO" id="GO:0006233">
    <property type="term" value="P:dTDP biosynthetic process"/>
    <property type="evidence" value="ECO:0007669"/>
    <property type="project" value="InterPro"/>
</dbReference>
<dbReference type="GO" id="GO:0006235">
    <property type="term" value="P:dTTP biosynthetic process"/>
    <property type="evidence" value="ECO:0007669"/>
    <property type="project" value="UniProtKB-UniRule"/>
</dbReference>
<dbReference type="GO" id="GO:0006227">
    <property type="term" value="P:dUDP biosynthetic process"/>
    <property type="evidence" value="ECO:0007669"/>
    <property type="project" value="TreeGrafter"/>
</dbReference>
<dbReference type="CDD" id="cd01672">
    <property type="entry name" value="TMPK"/>
    <property type="match status" value="1"/>
</dbReference>
<dbReference type="FunFam" id="3.40.50.300:FF:000225">
    <property type="entry name" value="Thymidylate kinase"/>
    <property type="match status" value="1"/>
</dbReference>
<dbReference type="Gene3D" id="3.40.50.300">
    <property type="entry name" value="P-loop containing nucleotide triphosphate hydrolases"/>
    <property type="match status" value="1"/>
</dbReference>
<dbReference type="HAMAP" id="MF_00165">
    <property type="entry name" value="Thymidylate_kinase"/>
    <property type="match status" value="1"/>
</dbReference>
<dbReference type="InterPro" id="IPR027417">
    <property type="entry name" value="P-loop_NTPase"/>
</dbReference>
<dbReference type="InterPro" id="IPR039430">
    <property type="entry name" value="Thymidylate_kin-like_dom"/>
</dbReference>
<dbReference type="InterPro" id="IPR018095">
    <property type="entry name" value="Thymidylate_kin_CS"/>
</dbReference>
<dbReference type="InterPro" id="IPR018094">
    <property type="entry name" value="Thymidylate_kinase"/>
</dbReference>
<dbReference type="NCBIfam" id="TIGR00041">
    <property type="entry name" value="DTMP_kinase"/>
    <property type="match status" value="1"/>
</dbReference>
<dbReference type="PANTHER" id="PTHR10344">
    <property type="entry name" value="THYMIDYLATE KINASE"/>
    <property type="match status" value="1"/>
</dbReference>
<dbReference type="PANTHER" id="PTHR10344:SF4">
    <property type="entry name" value="UMP-CMP KINASE 2, MITOCHONDRIAL"/>
    <property type="match status" value="1"/>
</dbReference>
<dbReference type="Pfam" id="PF02223">
    <property type="entry name" value="Thymidylate_kin"/>
    <property type="match status" value="1"/>
</dbReference>
<dbReference type="SUPFAM" id="SSF52540">
    <property type="entry name" value="P-loop containing nucleoside triphosphate hydrolases"/>
    <property type="match status" value="1"/>
</dbReference>
<dbReference type="PROSITE" id="PS01331">
    <property type="entry name" value="THYMIDYLATE_KINASE"/>
    <property type="match status" value="1"/>
</dbReference>
<name>KTHY_GEOTN</name>
<comment type="function">
    <text evidence="1">Phosphorylation of dTMP to form dTDP in both de novo and salvage pathways of dTTP synthesis.</text>
</comment>
<comment type="catalytic activity">
    <reaction evidence="1">
        <text>dTMP + ATP = dTDP + ADP</text>
        <dbReference type="Rhea" id="RHEA:13517"/>
        <dbReference type="ChEBI" id="CHEBI:30616"/>
        <dbReference type="ChEBI" id="CHEBI:58369"/>
        <dbReference type="ChEBI" id="CHEBI:63528"/>
        <dbReference type="ChEBI" id="CHEBI:456216"/>
        <dbReference type="EC" id="2.7.4.9"/>
    </reaction>
</comment>
<comment type="similarity">
    <text evidence="1">Belongs to the thymidylate kinase family.</text>
</comment>
<proteinExistence type="inferred from homology"/>
<evidence type="ECO:0000255" key="1">
    <source>
        <dbReference type="HAMAP-Rule" id="MF_00165"/>
    </source>
</evidence>
<sequence>MNGYFFSFEGPEGAGKTTMIGKLESFLRERGFDVMVTREPGGVRIAEAIRALILNREYTEMDGRTEALLYAAARRQHLLEKIVPALEAGRVVLCDRFVDSSLAYQGFARGLGVEEVWKINEFAIDGYMPSLTVYFDIDPQIGLERIRQNREREVNRLDLETLSFHDKVREGYRKLAKRFAERIVVIDASRPLDDVFSETVATVLSRLEGSKRHFHESNRDDSCWT</sequence>
<protein>
    <recommendedName>
        <fullName evidence="1">Thymidylate kinase</fullName>
        <ecNumber evidence="1">2.7.4.9</ecNumber>
    </recommendedName>
    <alternativeName>
        <fullName evidence="1">dTMP kinase</fullName>
    </alternativeName>
</protein>